<comment type="function">
    <text evidence="1 2 4 5">PACAP is a neuropeptide involved in diverse array of physiological processes through activating the PACAP subfamily of class B1 G protein-coupled receptors: VIP receptor 1 (VIPR1), VIP receptor 2 (VIPR2), and PACAP type I receptor (ADCYAP1R1) (By similarity). Exerts neuroprotective and general cytoprotective effects due to anti-apoptotic, anti-inflammatory, and antioxidant actions (PubMed:18055122). Promotes neuron projection development through the RAPGEF2/Rap1/B-Raf/ERK pathway (By similarity). In chromaffin cells, induces long-lasting increase of intracellular calcium concentrations and neuroendocrine secretion (By similarity). Involved in the control of glucose homeostasis, induces insulin secretion by pancreatic beta cells (PubMed:23913443). PACAP exists in two bioactive forms from proteolysis of the same precursor protein, PACAP27 and PACAP38, which differ by eleven amino acid residues in the C-terminus (By similarity).</text>
</comment>
<comment type="subcellular location">
    <subcellularLocation>
        <location>Secreted</location>
    </subcellularLocation>
</comment>
<comment type="disruption phenotype">
    <text evidence="4">Knockout mice show delayed recovery of axon regeneration after crush injury compared to wild-type mice. No difference in motor neuron survival after axotomy compared to wild-type mice.</text>
</comment>
<comment type="similarity">
    <text evidence="6">Belongs to the glucagon family.</text>
</comment>
<keyword id="KW-0027">Amidation</keyword>
<keyword id="KW-0165">Cleavage on pair of basic residues</keyword>
<keyword id="KW-0372">Hormone</keyword>
<keyword id="KW-0524">Neurogenesis</keyword>
<keyword id="KW-1185">Reference proteome</keyword>
<keyword id="KW-0964">Secreted</keyword>
<keyword id="KW-0732">Signal</keyword>
<name>PACA_MOUSE</name>
<evidence type="ECO:0000250" key="1">
    <source>
        <dbReference type="UniProtKB" id="P13589"/>
    </source>
</evidence>
<evidence type="ECO:0000250" key="2">
    <source>
        <dbReference type="UniProtKB" id="P18509"/>
    </source>
</evidence>
<evidence type="ECO:0000255" key="3"/>
<evidence type="ECO:0000269" key="4">
    <source>
    </source>
</evidence>
<evidence type="ECO:0000269" key="5">
    <source>
    </source>
</evidence>
<evidence type="ECO:0000305" key="6"/>
<evidence type="ECO:0000312" key="7">
    <source>
        <dbReference type="MGI" id="MGI:105094"/>
    </source>
</evidence>
<reference key="1">
    <citation type="journal article" date="1998" name="Gene">
        <title>Cloning and characterization of the mouse pituitary adenylate cyclase-activating polypeptide (PACAP) gene.</title>
        <authorList>
            <person name="Yamamoto K."/>
            <person name="Hashimoto H."/>
            <person name="Hagihara N."/>
            <person name="Nishino A."/>
            <person name="Fujita T."/>
            <person name="Matsuda T."/>
            <person name="Baba A."/>
        </authorList>
    </citation>
    <scope>NUCLEOTIDE SEQUENCE [GENOMIC DNA]</scope>
    <source>
        <strain>129/SvJ</strain>
    </source>
</reference>
<reference key="2">
    <citation type="journal article" date="2004" name="Genome Res.">
        <title>The status, quality, and expansion of the NIH full-length cDNA project: the Mammalian Gene Collection (MGC).</title>
        <authorList>
            <consortium name="The MGC Project Team"/>
        </authorList>
    </citation>
    <scope>NUCLEOTIDE SEQUENCE [LARGE SCALE MRNA]</scope>
    <source>
        <strain>C57BL/6J</strain>
        <tissue>Brain</tissue>
    </source>
</reference>
<reference key="3">
    <citation type="journal article" date="2008" name="Neuroscience">
        <title>Impaired nerve regeneration and enhanced neuroinflammatory response in mice lacking pituitary adenylyl cyclase activating peptide.</title>
        <authorList>
            <person name="Armstrong B.D."/>
            <person name="Abad C."/>
            <person name="Chhith S."/>
            <person name="Cheung-Lau G."/>
            <person name="Hajji O.E."/>
            <person name="Nobuta H."/>
            <person name="Waschek J.A."/>
        </authorList>
    </citation>
    <scope>FUNCTION</scope>
    <scope>DISRUPTION PHENOTYPE</scope>
</reference>
<reference key="4">
    <citation type="journal article" date="2013" name="Endocrinology">
        <title>The PACAP-regulated gene selenoprotein T is abundantly expressed in mouse and human beta-cells and its targeted inactivation impairs glucose tolerance.</title>
        <authorList>
            <person name="Prevost G."/>
            <person name="Arabo A."/>
            <person name="Jian L."/>
            <person name="Quelennec E."/>
            <person name="Cartier D."/>
            <person name="Hassan S."/>
            <person name="Falluel-Morel A."/>
            <person name="Tanguy Y."/>
            <person name="Gargani S."/>
            <person name="Lihrmann I."/>
            <person name="Kerr-Conte J."/>
            <person name="Lefebvre H."/>
            <person name="Pattou F."/>
            <person name="Anouar Y."/>
        </authorList>
    </citation>
    <scope>FUNCTION</scope>
</reference>
<dbReference type="EMBL" id="AB010149">
    <property type="protein sequence ID" value="BAA28355.1"/>
    <property type="molecule type" value="Genomic_DNA"/>
</dbReference>
<dbReference type="EMBL" id="BC057344">
    <property type="protein sequence ID" value="AAH57344.1"/>
    <property type="molecule type" value="mRNA"/>
</dbReference>
<dbReference type="CCDS" id="CCDS29029.1"/>
<dbReference type="RefSeq" id="NP_001302432.1">
    <property type="nucleotide sequence ID" value="NM_001315503.2"/>
</dbReference>
<dbReference type="RefSeq" id="NP_001302433.1">
    <property type="nucleotide sequence ID" value="NM_001315504.1"/>
</dbReference>
<dbReference type="RefSeq" id="NP_001396457.1">
    <property type="nucleotide sequence ID" value="NM_001409528.1"/>
</dbReference>
<dbReference type="RefSeq" id="NP_001396459.1">
    <property type="nucleotide sequence ID" value="NM_001409530.1"/>
</dbReference>
<dbReference type="RefSeq" id="NP_033755.1">
    <property type="nucleotide sequence ID" value="NM_009625.4"/>
</dbReference>
<dbReference type="BMRB" id="O70176"/>
<dbReference type="SMR" id="O70176"/>
<dbReference type="BioGRID" id="197979">
    <property type="interactions" value="2"/>
</dbReference>
<dbReference type="FunCoup" id="O70176">
    <property type="interactions" value="595"/>
</dbReference>
<dbReference type="STRING" id="10090.ENSMUSP00000067057"/>
<dbReference type="PhosphoSitePlus" id="O70176"/>
<dbReference type="PaxDb" id="10090-ENSMUSP00000067057"/>
<dbReference type="ProteomicsDB" id="294323"/>
<dbReference type="Antibodypedia" id="41707">
    <property type="antibodies" value="355 antibodies from 30 providers"/>
</dbReference>
<dbReference type="DNASU" id="11516"/>
<dbReference type="Ensembl" id="ENSMUST00000064775.8">
    <property type="protein sequence ID" value="ENSMUSP00000067057.7"/>
    <property type="gene ID" value="ENSMUSG00000024256.8"/>
</dbReference>
<dbReference type="Ensembl" id="ENSMUST00000234081.2">
    <property type="protein sequence ID" value="ENSMUSP00000157279.2"/>
    <property type="gene ID" value="ENSMUSG00000024256.8"/>
</dbReference>
<dbReference type="GeneID" id="11516"/>
<dbReference type="KEGG" id="mmu:11516"/>
<dbReference type="UCSC" id="uc008dwi.1">
    <property type="organism name" value="mouse"/>
</dbReference>
<dbReference type="AGR" id="MGI:105094"/>
<dbReference type="CTD" id="116"/>
<dbReference type="MGI" id="MGI:105094">
    <property type="gene designation" value="Adcyap1"/>
</dbReference>
<dbReference type="VEuPathDB" id="HostDB:ENSMUSG00000024256"/>
<dbReference type="eggNOG" id="ENOG502QSGB">
    <property type="taxonomic scope" value="Eukaryota"/>
</dbReference>
<dbReference type="GeneTree" id="ENSGT00950000183154"/>
<dbReference type="HOGENOM" id="CLU_118633_0_0_1"/>
<dbReference type="InParanoid" id="O70176"/>
<dbReference type="OMA" id="GIIMHCN"/>
<dbReference type="OrthoDB" id="9875627at2759"/>
<dbReference type="PhylomeDB" id="O70176"/>
<dbReference type="TreeFam" id="TF332804"/>
<dbReference type="Reactome" id="R-MMU-418555">
    <property type="pathway name" value="G alpha (s) signalling events"/>
</dbReference>
<dbReference type="Reactome" id="R-MMU-420092">
    <property type="pathway name" value="Glucagon-type ligand receptors"/>
</dbReference>
<dbReference type="BioGRID-ORCS" id="11516">
    <property type="hits" value="2 hits in 76 CRISPR screens"/>
</dbReference>
<dbReference type="ChiTaRS" id="Mzb1">
    <property type="organism name" value="mouse"/>
</dbReference>
<dbReference type="PRO" id="PR:O70176"/>
<dbReference type="Proteomes" id="UP000000589">
    <property type="component" value="Chromosome 17"/>
</dbReference>
<dbReference type="RNAct" id="O70176">
    <property type="molecule type" value="protein"/>
</dbReference>
<dbReference type="Bgee" id="ENSMUSG00000024256">
    <property type="expression patterns" value="Expressed in basal plate medulla oblongata and 110 other cell types or tissues"/>
</dbReference>
<dbReference type="ExpressionAtlas" id="O70176">
    <property type="expression patterns" value="baseline and differential"/>
</dbReference>
<dbReference type="GO" id="GO:0005615">
    <property type="term" value="C:extracellular space"/>
    <property type="evidence" value="ECO:0007669"/>
    <property type="project" value="Ensembl"/>
</dbReference>
<dbReference type="GO" id="GO:0005184">
    <property type="term" value="F:neuropeptide hormone activity"/>
    <property type="evidence" value="ECO:0000250"/>
    <property type="project" value="UniProtKB"/>
</dbReference>
<dbReference type="GO" id="GO:0051428">
    <property type="term" value="F:peptide hormone receptor binding"/>
    <property type="evidence" value="ECO:0000250"/>
    <property type="project" value="UniProtKB"/>
</dbReference>
<dbReference type="GO" id="GO:0016521">
    <property type="term" value="F:pituitary adenylate cyclase activating polypeptide activity"/>
    <property type="evidence" value="ECO:0000314"/>
    <property type="project" value="BHF-UCL"/>
</dbReference>
<dbReference type="GO" id="GO:0031891">
    <property type="term" value="F:type 1 vasoactive intestinal polypeptide receptor binding"/>
    <property type="evidence" value="ECO:0000250"/>
    <property type="project" value="UniProtKB"/>
</dbReference>
<dbReference type="GO" id="GO:0031892">
    <property type="term" value="F:type 2 vasoactive intestinal polypeptide receptor binding"/>
    <property type="evidence" value="ECO:0000250"/>
    <property type="project" value="UniProtKB"/>
</dbReference>
<dbReference type="GO" id="GO:0007189">
    <property type="term" value="P:adenylate cyclase-activating G protein-coupled receptor signaling pathway"/>
    <property type="evidence" value="ECO:0000314"/>
    <property type="project" value="BHF-UCL"/>
</dbReference>
<dbReference type="GO" id="GO:0007188">
    <property type="term" value="P:adenylate cyclase-modulating G protein-coupled receptor signaling pathway"/>
    <property type="evidence" value="ECO:0000250"/>
    <property type="project" value="UniProtKB"/>
</dbReference>
<dbReference type="GO" id="GO:0030073">
    <property type="term" value="P:insulin secretion"/>
    <property type="evidence" value="ECO:0000314"/>
    <property type="project" value="UniProtKB"/>
</dbReference>
<dbReference type="GO" id="GO:0045786">
    <property type="term" value="P:negative regulation of cell cycle"/>
    <property type="evidence" value="ECO:0000314"/>
    <property type="project" value="MGI"/>
</dbReference>
<dbReference type="GO" id="GO:0031175">
    <property type="term" value="P:neuron projection development"/>
    <property type="evidence" value="ECO:0000250"/>
    <property type="project" value="UniProtKB"/>
</dbReference>
<dbReference type="GO" id="GO:0007218">
    <property type="term" value="P:neuropeptide signaling pathway"/>
    <property type="evidence" value="ECO:0000250"/>
    <property type="project" value="UniProtKB"/>
</dbReference>
<dbReference type="GO" id="GO:0071651">
    <property type="term" value="P:positive regulation of chemokine (C-C motif) ligand 5 production"/>
    <property type="evidence" value="ECO:0007669"/>
    <property type="project" value="Ensembl"/>
</dbReference>
<dbReference type="GO" id="GO:0120162">
    <property type="term" value="P:positive regulation of cold-induced thermogenesis"/>
    <property type="evidence" value="ECO:0000315"/>
    <property type="project" value="YuBioLab"/>
</dbReference>
<dbReference type="GO" id="GO:0007204">
    <property type="term" value="P:positive regulation of cytosolic calcium ion concentration"/>
    <property type="evidence" value="ECO:0000250"/>
    <property type="project" value="UniProtKB"/>
</dbReference>
<dbReference type="GO" id="GO:0070374">
    <property type="term" value="P:positive regulation of ERK1 and ERK2 cascade"/>
    <property type="evidence" value="ECO:0000250"/>
    <property type="project" value="UniProtKB"/>
</dbReference>
<dbReference type="GO" id="GO:0010628">
    <property type="term" value="P:positive regulation of gene expression"/>
    <property type="evidence" value="ECO:0000314"/>
    <property type="project" value="MGI"/>
</dbReference>
<dbReference type="GO" id="GO:0060124">
    <property type="term" value="P:positive regulation of growth hormone secretion"/>
    <property type="evidence" value="ECO:0000250"/>
    <property type="project" value="UniProtKB"/>
</dbReference>
<dbReference type="GO" id="GO:0043547">
    <property type="term" value="P:positive regulation of GTPase activity"/>
    <property type="evidence" value="ECO:0000250"/>
    <property type="project" value="UniProtKB"/>
</dbReference>
<dbReference type="GO" id="GO:0045860">
    <property type="term" value="P:positive regulation of protein kinase activity"/>
    <property type="evidence" value="ECO:0000250"/>
    <property type="project" value="UniProtKB"/>
</dbReference>
<dbReference type="GO" id="GO:0045944">
    <property type="term" value="P:positive regulation of transcription by RNA polymerase II"/>
    <property type="evidence" value="ECO:0000250"/>
    <property type="project" value="UniProtKB"/>
</dbReference>
<dbReference type="GO" id="GO:0008277">
    <property type="term" value="P:regulation of G protein-coupled receptor signaling pathway"/>
    <property type="evidence" value="ECO:0000250"/>
    <property type="project" value="UniProtKB"/>
</dbReference>
<dbReference type="GO" id="GO:0032880">
    <property type="term" value="P:regulation of protein localization"/>
    <property type="evidence" value="ECO:0000314"/>
    <property type="project" value="BHF-UCL"/>
</dbReference>
<dbReference type="Gene3D" id="6.10.250.590">
    <property type="match status" value="1"/>
</dbReference>
<dbReference type="InterPro" id="IPR000532">
    <property type="entry name" value="Glucagon_GIP_secretin_VIP"/>
</dbReference>
<dbReference type="InterPro" id="IPR046963">
    <property type="entry name" value="VIP/GHRH-like"/>
</dbReference>
<dbReference type="PANTHER" id="PTHR11213">
    <property type="entry name" value="GLUCAGON-FAMILY NEUROPEPTIDE"/>
    <property type="match status" value="1"/>
</dbReference>
<dbReference type="PANTHER" id="PTHR11213:SF1">
    <property type="entry name" value="PITUITARY ADENYLATE CYCLASE-ACTIVATING POLYPEPTIDE"/>
    <property type="match status" value="1"/>
</dbReference>
<dbReference type="Pfam" id="PF00123">
    <property type="entry name" value="Hormone_2"/>
    <property type="match status" value="2"/>
</dbReference>
<dbReference type="PRINTS" id="PR00275">
    <property type="entry name" value="GLUCAGON"/>
</dbReference>
<dbReference type="SMART" id="SM00070">
    <property type="entry name" value="GLUCA"/>
    <property type="match status" value="2"/>
</dbReference>
<dbReference type="PROSITE" id="PS00260">
    <property type="entry name" value="GLUCAGON"/>
    <property type="match status" value="1"/>
</dbReference>
<sequence>MTMCSGARLALLVYGIIMHSSVSCSPAAGLSFPGIRPEDEAYDQDGNPLQDFYDWDPPGVGSPASALRDAYALYYPADRRDVAHEILNEAYRKVLDQLSARKYLQSVVARGAGENLGGSAVDDPAPLTKRHSDGIFTDSYSRYRKQMAVKKYLAAVLGKRYKQRVKNKGRRIAYL</sequence>
<feature type="signal peptide" evidence="3">
    <location>
        <begin position="1"/>
        <end position="24"/>
    </location>
</feature>
<feature type="propeptide" id="PRO_0000011491">
    <location>
        <begin position="25"/>
        <end position="78"/>
    </location>
</feature>
<feature type="peptide" id="PRO_0000011492" description="PACAP-related peptide">
    <location>
        <begin position="81"/>
        <end position="128"/>
    </location>
</feature>
<feature type="peptide" id="PRO_0000011493" description="Pituitary adenylate cyclase-activating polypeptide 38">
    <location>
        <begin position="131"/>
        <end position="168"/>
    </location>
</feature>
<feature type="peptide" id="PRO_0000011494" description="Pituitary adenylate cyclase-activating polypeptide 27">
    <location>
        <begin position="131"/>
        <end position="157"/>
    </location>
</feature>
<feature type="propeptide" id="PRO_0000011495">
    <location>
        <begin position="172"/>
        <end position="175"/>
    </location>
</feature>
<feature type="region of interest" description="Important for receptor binding" evidence="2">
    <location>
        <begin position="149"/>
        <end position="157"/>
    </location>
</feature>
<feature type="modified residue" description="Leucine amide" evidence="2">
    <location>
        <position position="157"/>
    </location>
</feature>
<feature type="modified residue" description="Lysine amide" evidence="2">
    <location>
        <position position="168"/>
    </location>
</feature>
<protein>
    <recommendedName>
        <fullName>Pituitary adenylate cyclase-activating polypeptide</fullName>
        <shortName>PACAP</shortName>
    </recommendedName>
    <component>
        <recommendedName>
            <fullName>PACAP-related peptide</fullName>
        </recommendedName>
        <alternativeName>
            <fullName>PRP-48</fullName>
        </alternativeName>
    </component>
    <component>
        <recommendedName>
            <fullName>Pituitary adenylate cyclase-activating polypeptide 27</fullName>
            <shortName>PACAP-27</shortName>
            <shortName>PACAP27</shortName>
        </recommendedName>
    </component>
    <component>
        <recommendedName>
            <fullName>Pituitary adenylate cyclase-activating polypeptide 38</fullName>
            <shortName>PACAP-38</shortName>
            <shortName>PACAP38</shortName>
        </recommendedName>
    </component>
</protein>
<proteinExistence type="evidence at transcript level"/>
<gene>
    <name evidence="7" type="primary">Adcyap1</name>
    <name type="synonym">Pacap</name>
</gene>
<organism>
    <name type="scientific">Mus musculus</name>
    <name type="common">Mouse</name>
    <dbReference type="NCBI Taxonomy" id="10090"/>
    <lineage>
        <taxon>Eukaryota</taxon>
        <taxon>Metazoa</taxon>
        <taxon>Chordata</taxon>
        <taxon>Craniata</taxon>
        <taxon>Vertebrata</taxon>
        <taxon>Euteleostomi</taxon>
        <taxon>Mammalia</taxon>
        <taxon>Eutheria</taxon>
        <taxon>Euarchontoglires</taxon>
        <taxon>Glires</taxon>
        <taxon>Rodentia</taxon>
        <taxon>Myomorpha</taxon>
        <taxon>Muroidea</taxon>
        <taxon>Muridae</taxon>
        <taxon>Murinae</taxon>
        <taxon>Mus</taxon>
        <taxon>Mus</taxon>
    </lineage>
</organism>
<accession>O70176</accession>